<gene>
    <name type="ordered locus">AF_1621</name>
</gene>
<name>Y1621_ARCFU</name>
<protein>
    <recommendedName>
        <fullName>UPF0324 membrane protein AF_1621</fullName>
    </recommendedName>
</protein>
<accession>O28652</accession>
<organism>
    <name type="scientific">Archaeoglobus fulgidus (strain ATCC 49558 / DSM 4304 / JCM 9628 / NBRC 100126 / VC-16)</name>
    <dbReference type="NCBI Taxonomy" id="224325"/>
    <lineage>
        <taxon>Archaea</taxon>
        <taxon>Methanobacteriati</taxon>
        <taxon>Methanobacteriota</taxon>
        <taxon>Archaeoglobi</taxon>
        <taxon>Archaeoglobales</taxon>
        <taxon>Archaeoglobaceae</taxon>
        <taxon>Archaeoglobus</taxon>
    </lineage>
</organism>
<keyword id="KW-1003">Cell membrane</keyword>
<keyword id="KW-0472">Membrane</keyword>
<keyword id="KW-1185">Reference proteome</keyword>
<keyword id="KW-0812">Transmembrane</keyword>
<keyword id="KW-1133">Transmembrane helix</keyword>
<proteinExistence type="inferred from homology"/>
<evidence type="ECO:0000255" key="1"/>
<evidence type="ECO:0000305" key="2"/>
<reference key="1">
    <citation type="journal article" date="1997" name="Nature">
        <title>The complete genome sequence of the hyperthermophilic, sulphate-reducing archaeon Archaeoglobus fulgidus.</title>
        <authorList>
            <person name="Klenk H.-P."/>
            <person name="Clayton R.A."/>
            <person name="Tomb J.-F."/>
            <person name="White O."/>
            <person name="Nelson K.E."/>
            <person name="Ketchum K.A."/>
            <person name="Dodson R.J."/>
            <person name="Gwinn M.L."/>
            <person name="Hickey E.K."/>
            <person name="Peterson J.D."/>
            <person name="Richardson D.L."/>
            <person name="Kerlavage A.R."/>
            <person name="Graham D.E."/>
            <person name="Kyrpides N.C."/>
            <person name="Fleischmann R.D."/>
            <person name="Quackenbush J."/>
            <person name="Lee N.H."/>
            <person name="Sutton G.G."/>
            <person name="Gill S.R."/>
            <person name="Kirkness E.F."/>
            <person name="Dougherty B.A."/>
            <person name="McKenney K."/>
            <person name="Adams M.D."/>
            <person name="Loftus B.J."/>
            <person name="Peterson S.N."/>
            <person name="Reich C.I."/>
            <person name="McNeil L.K."/>
            <person name="Badger J.H."/>
            <person name="Glodek A."/>
            <person name="Zhou L."/>
            <person name="Overbeek R."/>
            <person name="Gocayne J.D."/>
            <person name="Weidman J.F."/>
            <person name="McDonald L.A."/>
            <person name="Utterback T.R."/>
            <person name="Cotton M.D."/>
            <person name="Spriggs T."/>
            <person name="Artiach P."/>
            <person name="Kaine B.P."/>
            <person name="Sykes S.M."/>
            <person name="Sadow P.W."/>
            <person name="D'Andrea K.P."/>
            <person name="Bowman C."/>
            <person name="Fujii C."/>
            <person name="Garland S.A."/>
            <person name="Mason T.M."/>
            <person name="Olsen G.J."/>
            <person name="Fraser C.M."/>
            <person name="Smith H.O."/>
            <person name="Woese C.R."/>
            <person name="Venter J.C."/>
        </authorList>
    </citation>
    <scope>NUCLEOTIDE SEQUENCE [LARGE SCALE GENOMIC DNA]</scope>
    <source>
        <strain>ATCC 49558 / DSM 4304 / JCM 9628 / NBRC 100126 / VC-16</strain>
    </source>
</reference>
<dbReference type="EMBL" id="AE000782">
    <property type="protein sequence ID" value="AAB89624.1"/>
    <property type="molecule type" value="Genomic_DNA"/>
</dbReference>
<dbReference type="PIR" id="D69452">
    <property type="entry name" value="D69452"/>
</dbReference>
<dbReference type="RefSeq" id="WP_010879118.1">
    <property type="nucleotide sequence ID" value="NC_000917.1"/>
</dbReference>
<dbReference type="STRING" id="224325.AF_1621"/>
<dbReference type="TCDB" id="2.A.98.2.1">
    <property type="family name" value="the putative sulfate exporter (pse) family"/>
</dbReference>
<dbReference type="PaxDb" id="224325-AF_1621"/>
<dbReference type="EnsemblBacteria" id="AAB89624">
    <property type="protein sequence ID" value="AAB89624"/>
    <property type="gene ID" value="AF_1621"/>
</dbReference>
<dbReference type="GeneID" id="41337925"/>
<dbReference type="KEGG" id="afu:AF_1621"/>
<dbReference type="eggNOG" id="arCOG03873">
    <property type="taxonomic scope" value="Archaea"/>
</dbReference>
<dbReference type="HOGENOM" id="CLU_867684_0_0_2"/>
<dbReference type="OrthoDB" id="26684at2157"/>
<dbReference type="PhylomeDB" id="O28652"/>
<dbReference type="Proteomes" id="UP000002199">
    <property type="component" value="Chromosome"/>
</dbReference>
<dbReference type="GO" id="GO:0005886">
    <property type="term" value="C:plasma membrane"/>
    <property type="evidence" value="ECO:0007669"/>
    <property type="project" value="UniProtKB-SubCell"/>
</dbReference>
<dbReference type="InterPro" id="IPR018383">
    <property type="entry name" value="UPF0324_pro"/>
</dbReference>
<dbReference type="InterPro" id="IPR004630">
    <property type="entry name" value="UPF0324_YeiH-like"/>
</dbReference>
<dbReference type="NCBIfam" id="TIGR00698">
    <property type="entry name" value="YeiH family putative sulfate export transporter"/>
    <property type="match status" value="1"/>
</dbReference>
<dbReference type="PANTHER" id="PTHR30106">
    <property type="entry name" value="INNER MEMBRANE PROTEIN YEIH-RELATED"/>
    <property type="match status" value="1"/>
</dbReference>
<dbReference type="PANTHER" id="PTHR30106:SF2">
    <property type="entry name" value="UPF0324 INNER MEMBRANE PROTEIN YEIH"/>
    <property type="match status" value="1"/>
</dbReference>
<dbReference type="Pfam" id="PF03601">
    <property type="entry name" value="Cons_hypoth698"/>
    <property type="match status" value="1"/>
</dbReference>
<sequence>MRETVKLIEVARELPVSRKNLQMLLLLLLCGAAAYIINLADPALEPLFLALVFGIVAGNLQRDEEKKRVVERYVPFLLPIGITLYGVNINIPYLGEFHPEIVAATLISTSLIFLTVFWLSSRLKLSRQMSILLACGSGICGVSAIAIISPLIKPRKEEFSAAIMIITAVGLTGAILYPSIAHYASISPDEFAVLAGATLHQTGIVKISSQLFGVEEEALAIKGIRIAMIALVVLILSIIYSESRFYVPWYIVSFLGVALFSSTYLPGEVVQALRPLATVMFATTLAAICYTVNVGRVQRVGVKPLFASYAGWAVGVAFVLLLLGSGAL</sequence>
<comment type="subcellular location">
    <subcellularLocation>
        <location evidence="2">Cell membrane</location>
        <topology evidence="2">Multi-pass membrane protein</topology>
    </subcellularLocation>
</comment>
<comment type="similarity">
    <text evidence="2">Belongs to the UPF0324 family.</text>
</comment>
<feature type="chain" id="PRO_0000157473" description="UPF0324 membrane protein AF_1621">
    <location>
        <begin position="1"/>
        <end position="328"/>
    </location>
</feature>
<feature type="transmembrane region" description="Helical" evidence="1">
    <location>
        <begin position="21"/>
        <end position="39"/>
    </location>
</feature>
<feature type="transmembrane region" description="Helical" evidence="1">
    <location>
        <begin position="43"/>
        <end position="60"/>
    </location>
</feature>
<feature type="transmembrane region" description="Helical" evidence="1">
    <location>
        <begin position="73"/>
        <end position="95"/>
    </location>
</feature>
<feature type="transmembrane region" description="Helical" evidence="1">
    <location>
        <begin position="101"/>
        <end position="123"/>
    </location>
</feature>
<feature type="transmembrane region" description="Helical" evidence="1">
    <location>
        <begin position="130"/>
        <end position="152"/>
    </location>
</feature>
<feature type="transmembrane region" description="Helical" evidence="1">
    <location>
        <begin position="162"/>
        <end position="184"/>
    </location>
</feature>
<feature type="transmembrane region" description="Helical" evidence="1">
    <location>
        <begin position="191"/>
        <end position="213"/>
    </location>
</feature>
<feature type="transmembrane region" description="Helical" evidence="1">
    <location>
        <begin position="223"/>
        <end position="240"/>
    </location>
</feature>
<feature type="transmembrane region" description="Helical" evidence="1">
    <location>
        <begin position="245"/>
        <end position="267"/>
    </location>
</feature>
<feature type="transmembrane region" description="Helical" evidence="1">
    <location>
        <begin position="271"/>
        <end position="293"/>
    </location>
</feature>
<feature type="transmembrane region" description="Helical" evidence="1">
    <location>
        <begin position="305"/>
        <end position="327"/>
    </location>
</feature>